<dbReference type="EC" id="5.4.2.12" evidence="1"/>
<dbReference type="EMBL" id="AE017196">
    <property type="protein sequence ID" value="AAS14552.1"/>
    <property type="molecule type" value="Genomic_DNA"/>
</dbReference>
<dbReference type="RefSeq" id="WP_010082408.1">
    <property type="nucleotide sequence ID" value="NZ_OX384529.1"/>
</dbReference>
<dbReference type="SMR" id="Q73GR4"/>
<dbReference type="EnsemblBacteria" id="AAS14552">
    <property type="protein sequence ID" value="AAS14552"/>
    <property type="gene ID" value="WD_0868"/>
</dbReference>
<dbReference type="GeneID" id="70036344"/>
<dbReference type="KEGG" id="wol:WD_0868"/>
<dbReference type="eggNOG" id="COG0696">
    <property type="taxonomic scope" value="Bacteria"/>
</dbReference>
<dbReference type="UniPathway" id="UPA00109">
    <property type="reaction ID" value="UER00186"/>
</dbReference>
<dbReference type="Proteomes" id="UP000008215">
    <property type="component" value="Chromosome"/>
</dbReference>
<dbReference type="GO" id="GO:0005829">
    <property type="term" value="C:cytosol"/>
    <property type="evidence" value="ECO:0007669"/>
    <property type="project" value="TreeGrafter"/>
</dbReference>
<dbReference type="GO" id="GO:0030145">
    <property type="term" value="F:manganese ion binding"/>
    <property type="evidence" value="ECO:0007669"/>
    <property type="project" value="UniProtKB-UniRule"/>
</dbReference>
<dbReference type="GO" id="GO:0004619">
    <property type="term" value="F:phosphoglycerate mutase activity"/>
    <property type="evidence" value="ECO:0007669"/>
    <property type="project" value="UniProtKB-EC"/>
</dbReference>
<dbReference type="GO" id="GO:0006007">
    <property type="term" value="P:glucose catabolic process"/>
    <property type="evidence" value="ECO:0007669"/>
    <property type="project" value="InterPro"/>
</dbReference>
<dbReference type="GO" id="GO:0006096">
    <property type="term" value="P:glycolytic process"/>
    <property type="evidence" value="ECO:0007669"/>
    <property type="project" value="UniProtKB-UniRule"/>
</dbReference>
<dbReference type="CDD" id="cd16010">
    <property type="entry name" value="iPGM"/>
    <property type="match status" value="1"/>
</dbReference>
<dbReference type="FunFam" id="3.40.1450.10:FF:000002">
    <property type="entry name" value="2,3-bisphosphoglycerate-independent phosphoglycerate mutase"/>
    <property type="match status" value="1"/>
</dbReference>
<dbReference type="Gene3D" id="3.40.720.10">
    <property type="entry name" value="Alkaline Phosphatase, subunit A"/>
    <property type="match status" value="1"/>
</dbReference>
<dbReference type="Gene3D" id="3.40.1450.10">
    <property type="entry name" value="BPG-independent phosphoglycerate mutase, domain B"/>
    <property type="match status" value="1"/>
</dbReference>
<dbReference type="HAMAP" id="MF_01038">
    <property type="entry name" value="GpmI"/>
    <property type="match status" value="1"/>
</dbReference>
<dbReference type="InterPro" id="IPR017850">
    <property type="entry name" value="Alkaline_phosphatase_core_sf"/>
</dbReference>
<dbReference type="InterPro" id="IPR011258">
    <property type="entry name" value="BPG-indep_PGM_N"/>
</dbReference>
<dbReference type="InterPro" id="IPR006124">
    <property type="entry name" value="Metalloenzyme"/>
</dbReference>
<dbReference type="InterPro" id="IPR036646">
    <property type="entry name" value="PGAM_B_sf"/>
</dbReference>
<dbReference type="InterPro" id="IPR005995">
    <property type="entry name" value="Pgm_bpd_ind"/>
</dbReference>
<dbReference type="NCBIfam" id="TIGR01307">
    <property type="entry name" value="pgm_bpd_ind"/>
    <property type="match status" value="1"/>
</dbReference>
<dbReference type="PANTHER" id="PTHR31637">
    <property type="entry name" value="2,3-BISPHOSPHOGLYCERATE-INDEPENDENT PHOSPHOGLYCERATE MUTASE"/>
    <property type="match status" value="1"/>
</dbReference>
<dbReference type="PANTHER" id="PTHR31637:SF0">
    <property type="entry name" value="2,3-BISPHOSPHOGLYCERATE-INDEPENDENT PHOSPHOGLYCERATE MUTASE"/>
    <property type="match status" value="1"/>
</dbReference>
<dbReference type="Pfam" id="PF06415">
    <property type="entry name" value="iPGM_N"/>
    <property type="match status" value="1"/>
</dbReference>
<dbReference type="Pfam" id="PF01676">
    <property type="entry name" value="Metalloenzyme"/>
    <property type="match status" value="1"/>
</dbReference>
<dbReference type="PIRSF" id="PIRSF001492">
    <property type="entry name" value="IPGAM"/>
    <property type="match status" value="1"/>
</dbReference>
<dbReference type="SUPFAM" id="SSF64158">
    <property type="entry name" value="2,3-Bisphosphoglycerate-independent phosphoglycerate mutase, substrate-binding domain"/>
    <property type="match status" value="1"/>
</dbReference>
<dbReference type="SUPFAM" id="SSF53649">
    <property type="entry name" value="Alkaline phosphatase-like"/>
    <property type="match status" value="1"/>
</dbReference>
<organism>
    <name type="scientific">Wolbachia pipientis wMel</name>
    <dbReference type="NCBI Taxonomy" id="163164"/>
    <lineage>
        <taxon>Bacteria</taxon>
        <taxon>Pseudomonadati</taxon>
        <taxon>Pseudomonadota</taxon>
        <taxon>Alphaproteobacteria</taxon>
        <taxon>Rickettsiales</taxon>
        <taxon>Anaplasmataceae</taxon>
        <taxon>Wolbachieae</taxon>
        <taxon>Wolbachia</taxon>
    </lineage>
</organism>
<comment type="function">
    <text evidence="1">Catalyzes the interconversion of 2-phosphoglycerate and 3-phosphoglycerate.</text>
</comment>
<comment type="catalytic activity">
    <reaction evidence="1">
        <text>(2R)-2-phosphoglycerate = (2R)-3-phosphoglycerate</text>
        <dbReference type="Rhea" id="RHEA:15901"/>
        <dbReference type="ChEBI" id="CHEBI:58272"/>
        <dbReference type="ChEBI" id="CHEBI:58289"/>
        <dbReference type="EC" id="5.4.2.12"/>
    </reaction>
</comment>
<comment type="cofactor">
    <cofactor evidence="1">
        <name>Mn(2+)</name>
        <dbReference type="ChEBI" id="CHEBI:29035"/>
    </cofactor>
    <text evidence="1">Binds 2 manganese ions per subunit.</text>
</comment>
<comment type="pathway">
    <text evidence="1">Carbohydrate degradation; glycolysis; pyruvate from D-glyceraldehyde 3-phosphate: step 3/5.</text>
</comment>
<comment type="subunit">
    <text evidence="1">Monomer.</text>
</comment>
<comment type="similarity">
    <text evidence="1">Belongs to the BPG-independent phosphoglycerate mutase family.</text>
</comment>
<sequence>MNIKSVVLCILDGWGNGIENNKYNAISNANPPCWQYISSNYPKCSLSACGADVGLPGGQIGNSEVGHMNIGSGRVVIQSLQRINQEIGTIENNVNLQSFINDLKSKNGVCHIMGLVSDGGVHSHQKHISTLANKISQHGIKVVIHAFLDGRDTLPNSGKKCIQEFTKSIKGNDTRIATVSGRYYAMDRDNRWKRTIEAYEAIAFAKAPCHDNAVSLIENNYQNNITDEFIRPAVIGDYQGIKPEDGVLLANFRADRMIQLASILLGKTDYAKVAKFSSILSMMKYKEDLKIPYIFPPTSFADTLGQTIEDNKLRQLRIAETEKYAHVTFFFNCGKEEPFSGEERILIPSPKVQTYDLQPEMSAFELTEKLVEKIHSQEFALIVVNYANPDMVGHTGNIKAAEKAVLAVDDCLAKVLNAVKKSSNTALIVTADHGNVECMFDEENNTPHTAHTLNKVPFIVSCDNLKLRDGRLSDIAPTILQLLGIKKPNEMTGSSLISCITLCHSS</sequence>
<keyword id="KW-0324">Glycolysis</keyword>
<keyword id="KW-0413">Isomerase</keyword>
<keyword id="KW-0464">Manganese</keyword>
<keyword id="KW-0479">Metal-binding</keyword>
<feature type="chain" id="PRO_0000212231" description="2,3-bisphosphoglycerate-independent phosphoglycerate mutase">
    <location>
        <begin position="1"/>
        <end position="506"/>
    </location>
</feature>
<feature type="active site" description="Phosphoserine intermediate" evidence="1">
    <location>
        <position position="63"/>
    </location>
</feature>
<feature type="binding site" evidence="1">
    <location>
        <position position="12"/>
    </location>
    <ligand>
        <name>Mn(2+)</name>
        <dbReference type="ChEBI" id="CHEBI:29035"/>
        <label>2</label>
    </ligand>
</feature>
<feature type="binding site" evidence="1">
    <location>
        <position position="63"/>
    </location>
    <ligand>
        <name>Mn(2+)</name>
        <dbReference type="ChEBI" id="CHEBI:29035"/>
        <label>2</label>
    </ligand>
</feature>
<feature type="binding site" evidence="1">
    <location>
        <position position="122"/>
    </location>
    <ligand>
        <name>substrate</name>
    </ligand>
</feature>
<feature type="binding site" evidence="1">
    <location>
        <begin position="151"/>
        <end position="152"/>
    </location>
    <ligand>
        <name>substrate</name>
    </ligand>
</feature>
<feature type="binding site" evidence="1">
    <location>
        <position position="182"/>
    </location>
    <ligand>
        <name>substrate</name>
    </ligand>
</feature>
<feature type="binding site" evidence="1">
    <location>
        <position position="188"/>
    </location>
    <ligand>
        <name>substrate</name>
    </ligand>
</feature>
<feature type="binding site" evidence="1">
    <location>
        <begin position="253"/>
        <end position="256"/>
    </location>
    <ligand>
        <name>substrate</name>
    </ligand>
</feature>
<feature type="binding site" evidence="1">
    <location>
        <position position="323"/>
    </location>
    <ligand>
        <name>substrate</name>
    </ligand>
</feature>
<feature type="binding site" evidence="1">
    <location>
        <position position="390"/>
    </location>
    <ligand>
        <name>Mn(2+)</name>
        <dbReference type="ChEBI" id="CHEBI:29035"/>
        <label>1</label>
    </ligand>
</feature>
<feature type="binding site" evidence="1">
    <location>
        <position position="394"/>
    </location>
    <ligand>
        <name>Mn(2+)</name>
        <dbReference type="ChEBI" id="CHEBI:29035"/>
        <label>1</label>
    </ligand>
</feature>
<feature type="binding site" evidence="1">
    <location>
        <position position="432"/>
    </location>
    <ligand>
        <name>Mn(2+)</name>
        <dbReference type="ChEBI" id="CHEBI:29035"/>
        <label>2</label>
    </ligand>
</feature>
<feature type="binding site" evidence="1">
    <location>
        <position position="433"/>
    </location>
    <ligand>
        <name>Mn(2+)</name>
        <dbReference type="ChEBI" id="CHEBI:29035"/>
        <label>2</label>
    </ligand>
</feature>
<feature type="binding site" evidence="1">
    <location>
        <position position="451"/>
    </location>
    <ligand>
        <name>Mn(2+)</name>
        <dbReference type="ChEBI" id="CHEBI:29035"/>
        <label>1</label>
    </ligand>
</feature>
<accession>Q73GR4</accession>
<name>GPMI_WOLPM</name>
<evidence type="ECO:0000255" key="1">
    <source>
        <dbReference type="HAMAP-Rule" id="MF_01038"/>
    </source>
</evidence>
<proteinExistence type="inferred from homology"/>
<gene>
    <name evidence="1" type="primary">gpmI</name>
    <name type="synonym">pgm</name>
    <name type="ordered locus">WD_0868</name>
</gene>
<protein>
    <recommendedName>
        <fullName evidence="1">2,3-bisphosphoglycerate-independent phosphoglycerate mutase</fullName>
        <shortName evidence="1">BPG-independent PGAM</shortName>
        <shortName evidence="1">Phosphoglyceromutase</shortName>
        <shortName evidence="1">iPGM</shortName>
        <ecNumber evidence="1">5.4.2.12</ecNumber>
    </recommendedName>
</protein>
<reference key="1">
    <citation type="journal article" date="2004" name="PLoS Biol.">
        <title>Phylogenomics of the reproductive parasite Wolbachia pipientis wMel: a streamlined genome overrun by mobile genetic elements.</title>
        <authorList>
            <person name="Wu M."/>
            <person name="Sun L.V."/>
            <person name="Vamathevan J.J."/>
            <person name="Riegler M."/>
            <person name="DeBoy R.T."/>
            <person name="Brownlie J.C."/>
            <person name="McGraw E.A."/>
            <person name="Martin W."/>
            <person name="Esser C."/>
            <person name="Ahmadinejad N."/>
            <person name="Wiegand C."/>
            <person name="Madupu R."/>
            <person name="Beanan M.J."/>
            <person name="Brinkac L.M."/>
            <person name="Daugherty S.C."/>
            <person name="Durkin A.S."/>
            <person name="Kolonay J.F."/>
            <person name="Nelson W.C."/>
            <person name="Mohamoud Y."/>
            <person name="Lee P."/>
            <person name="Berry K.J."/>
            <person name="Young M.B."/>
            <person name="Utterback T.R."/>
            <person name="Weidman J.F."/>
            <person name="Nierman W.C."/>
            <person name="Paulsen I.T."/>
            <person name="Nelson K.E."/>
            <person name="Tettelin H."/>
            <person name="O'Neill S.L."/>
            <person name="Eisen J.A."/>
        </authorList>
    </citation>
    <scope>NUCLEOTIDE SEQUENCE [LARGE SCALE GENOMIC DNA]</scope>
</reference>